<proteinExistence type="evidence at transcript level"/>
<comment type="function">
    <text evidence="5">Probable cation transporter. May be involved in regulation of potassium-sodium homeostasis.</text>
</comment>
<comment type="subcellular location">
    <subcellularLocation>
        <location evidence="1">Membrane</location>
        <topology evidence="1">Multi-pass membrane protein</topology>
    </subcellularLocation>
</comment>
<comment type="domain">
    <text evidence="5">HKT transporters are proposed to contain 4 pore-forming regions enclosed by transmembrane segments with each containing a potassium channel-like selectivity filter motif.</text>
</comment>
<comment type="similarity">
    <text evidence="5">Belongs to the TrkH potassium transport family. HKT (TC 2.A.38.3) subfamily.</text>
</comment>
<comment type="sequence caution" evidence="5">
    <conflict type="erroneous gene model prediction">
        <sequence resource="EMBL-CDS" id="CAE03639"/>
    </conflict>
</comment>
<name>HKT14_ORYSJ</name>
<feature type="chain" id="PRO_0000070471" description="Probable cation transporter HKT1;4">
    <location>
        <begin position="1"/>
        <end position="500"/>
    </location>
</feature>
<feature type="topological domain" description="Cytoplasmic" evidence="1">
    <location>
        <begin position="1"/>
        <end position="12"/>
    </location>
</feature>
<feature type="transmembrane region" description="Helical; Name=1" evidence="1">
    <location>
        <begin position="13"/>
        <end position="33"/>
    </location>
</feature>
<feature type="transmembrane region" description="Helical; Name=2" evidence="1">
    <location>
        <begin position="74"/>
        <end position="94"/>
    </location>
</feature>
<feature type="topological domain" description="Cytoplasmic" evidence="1">
    <location>
        <begin position="95"/>
        <end position="156"/>
    </location>
</feature>
<feature type="transmembrane region" description="Helical; Name=3" evidence="1">
    <location>
        <begin position="157"/>
        <end position="177"/>
    </location>
</feature>
<feature type="transmembrane region" description="Helical; Name=4" evidence="1">
    <location>
        <begin position="239"/>
        <end position="259"/>
    </location>
</feature>
<feature type="topological domain" description="Cytoplasmic" evidence="1">
    <location>
        <begin position="260"/>
        <end position="290"/>
    </location>
</feature>
<feature type="transmembrane region" description="Helical; Name=5" evidence="1">
    <location>
        <begin position="291"/>
        <end position="311"/>
    </location>
</feature>
<feature type="transmembrane region" description="Helical; Name=6" evidence="1">
    <location>
        <begin position="346"/>
        <end position="366"/>
    </location>
</feature>
<feature type="topological domain" description="Cytoplasmic" evidence="1">
    <location>
        <begin position="367"/>
        <end position="390"/>
    </location>
</feature>
<feature type="transmembrane region" description="Helical; Name=7" evidence="1">
    <location>
        <begin position="391"/>
        <end position="411"/>
    </location>
</feature>
<feature type="transmembrane region" description="Helical; Name=8" evidence="1">
    <location>
        <begin position="464"/>
        <end position="484"/>
    </location>
</feature>
<feature type="topological domain" description="Cytoplasmic" evidence="1">
    <location>
        <begin position="485"/>
        <end position="500"/>
    </location>
</feature>
<feature type="region of interest" description="Disordered" evidence="2">
    <location>
        <begin position="121"/>
        <end position="145"/>
    </location>
</feature>
<accession>Q7XPF7</accession>
<accession>Q0JAB3</accession>
<accession>Q8L6H5</accession>
<gene>
    <name evidence="4" type="primary">HKT1;4</name>
    <name evidence="3" type="synonym">HKT7</name>
    <name evidence="6" type="ordered locus">Os04g0607600</name>
    <name evidence="5" type="ordered locus">LOC_Os04g51830</name>
    <name evidence="7" type="ORF">OSJNBa0060N03.4</name>
</gene>
<reference key="1">
    <citation type="journal article" date="2003" name="Plant J.">
        <title>Sodium transport and HKT transporters: the rice model.</title>
        <authorList>
            <person name="Garciadeblas B."/>
            <person name="Senn M.E."/>
            <person name="Banuelos M.A."/>
            <person name="Rodriguez-Navarro A."/>
        </authorList>
    </citation>
    <scope>NUCLEOTIDE SEQUENCE [GENOMIC DNA]</scope>
    <scope>NOMENCLATURE</scope>
    <source>
        <strain>cv. Nipponbare</strain>
    </source>
</reference>
<reference key="2">
    <citation type="journal article" date="2002" name="Nature">
        <title>Sequence and analysis of rice chromosome 4.</title>
        <authorList>
            <person name="Feng Q."/>
            <person name="Zhang Y."/>
            <person name="Hao P."/>
            <person name="Wang S."/>
            <person name="Fu G."/>
            <person name="Huang Y."/>
            <person name="Li Y."/>
            <person name="Zhu J."/>
            <person name="Liu Y."/>
            <person name="Hu X."/>
            <person name="Jia P."/>
            <person name="Zhang Y."/>
            <person name="Zhao Q."/>
            <person name="Ying K."/>
            <person name="Yu S."/>
            <person name="Tang Y."/>
            <person name="Weng Q."/>
            <person name="Zhang L."/>
            <person name="Lu Y."/>
            <person name="Mu J."/>
            <person name="Lu Y."/>
            <person name="Zhang L.S."/>
            <person name="Yu Z."/>
            <person name="Fan D."/>
            <person name="Liu X."/>
            <person name="Lu T."/>
            <person name="Li C."/>
            <person name="Wu Y."/>
            <person name="Sun T."/>
            <person name="Lei H."/>
            <person name="Li T."/>
            <person name="Hu H."/>
            <person name="Guan J."/>
            <person name="Wu M."/>
            <person name="Zhang R."/>
            <person name="Zhou B."/>
            <person name="Chen Z."/>
            <person name="Chen L."/>
            <person name="Jin Z."/>
            <person name="Wang R."/>
            <person name="Yin H."/>
            <person name="Cai Z."/>
            <person name="Ren S."/>
            <person name="Lv G."/>
            <person name="Gu W."/>
            <person name="Zhu G."/>
            <person name="Tu Y."/>
            <person name="Jia J."/>
            <person name="Zhang Y."/>
            <person name="Chen J."/>
            <person name="Kang H."/>
            <person name="Chen X."/>
            <person name="Shao C."/>
            <person name="Sun Y."/>
            <person name="Hu Q."/>
            <person name="Zhang X."/>
            <person name="Zhang W."/>
            <person name="Wang L."/>
            <person name="Ding C."/>
            <person name="Sheng H."/>
            <person name="Gu J."/>
            <person name="Chen S."/>
            <person name="Ni L."/>
            <person name="Zhu F."/>
            <person name="Chen W."/>
            <person name="Lan L."/>
            <person name="Lai Y."/>
            <person name="Cheng Z."/>
            <person name="Gu M."/>
            <person name="Jiang J."/>
            <person name="Li J."/>
            <person name="Hong G."/>
            <person name="Xue Y."/>
            <person name="Han B."/>
        </authorList>
    </citation>
    <scope>NUCLEOTIDE SEQUENCE [LARGE SCALE GENOMIC DNA]</scope>
    <source>
        <strain>cv. Nipponbare</strain>
    </source>
</reference>
<reference key="3">
    <citation type="journal article" date="2005" name="Nature">
        <title>The map-based sequence of the rice genome.</title>
        <authorList>
            <consortium name="International rice genome sequencing project (IRGSP)"/>
        </authorList>
    </citation>
    <scope>NUCLEOTIDE SEQUENCE [LARGE SCALE GENOMIC DNA]</scope>
    <source>
        <strain>cv. Nipponbare</strain>
    </source>
</reference>
<reference key="4">
    <citation type="journal article" date="2008" name="Nucleic Acids Res.">
        <title>The rice annotation project database (RAP-DB): 2008 update.</title>
        <authorList>
            <consortium name="The rice annotation project (RAP)"/>
        </authorList>
    </citation>
    <scope>GENOME REANNOTATION</scope>
    <source>
        <strain>cv. Nipponbare</strain>
    </source>
</reference>
<reference key="5">
    <citation type="journal article" date="2013" name="Rice">
        <title>Improvement of the Oryza sativa Nipponbare reference genome using next generation sequence and optical map data.</title>
        <authorList>
            <person name="Kawahara Y."/>
            <person name="de la Bastide M."/>
            <person name="Hamilton J.P."/>
            <person name="Kanamori H."/>
            <person name="McCombie W.R."/>
            <person name="Ouyang S."/>
            <person name="Schwartz D.C."/>
            <person name="Tanaka T."/>
            <person name="Wu J."/>
            <person name="Zhou S."/>
            <person name="Childs K.L."/>
            <person name="Davidson R.M."/>
            <person name="Lin H."/>
            <person name="Quesada-Ocampo L."/>
            <person name="Vaillancourt B."/>
            <person name="Sakai H."/>
            <person name="Lee S.S."/>
            <person name="Kim J."/>
            <person name="Numa H."/>
            <person name="Itoh T."/>
            <person name="Buell C.R."/>
            <person name="Matsumoto T."/>
        </authorList>
    </citation>
    <scope>GENOME REANNOTATION</scope>
    <source>
        <strain>cv. Nipponbare</strain>
    </source>
</reference>
<reference key="6">
    <citation type="journal article" date="2003" name="Science">
        <title>Collection, mapping, and annotation of over 28,000 cDNA clones from japonica rice.</title>
        <authorList>
            <consortium name="The rice full-length cDNA consortium"/>
        </authorList>
    </citation>
    <scope>NUCLEOTIDE SEQUENCE [LARGE SCALE MRNA]</scope>
    <source>
        <strain>cv. Nipponbare</strain>
    </source>
</reference>
<reference key="7">
    <citation type="journal article" date="2006" name="Trends Plant Sci.">
        <title>Nomenclature for HKT transporters, key determinants of plant salinity tolerance.</title>
        <authorList>
            <person name="Platten J.D."/>
            <person name="Cotsaftis O."/>
            <person name="Berthomieu P."/>
            <person name="Bohnert H."/>
            <person name="Davenport R.J."/>
            <person name="Fairbairn D.J."/>
            <person name="Horie T."/>
            <person name="Leigh R.A."/>
            <person name="Lin H.X."/>
            <person name="Luan S."/>
            <person name="Maeser P."/>
            <person name="Pantoja O."/>
            <person name="Rodriguez-Navarro A."/>
            <person name="Schachtman D.P."/>
            <person name="Schroeder J.I."/>
            <person name="Sentenac H."/>
            <person name="Uozumi N."/>
            <person name="Very A.A."/>
            <person name="Zhu J.K."/>
            <person name="Dennis E.S."/>
            <person name="Tester M."/>
        </authorList>
    </citation>
    <scope>GENE FAMILY</scope>
    <scope>NOMENCLATURE</scope>
</reference>
<sequence>MPTSRRALAGGALSMHVAYFLAISCLGYGLLGVLKVREPGAAPRRIDRFFTAVSAATVSSMSTVEMEVFSNGQLVVLTVLMLLGGEVFVSLVGLASKWSKLRSDAMDRSRRVESHGDVALADIDGGDVENPTSSGEEAASRRRPMDADTLRHNAVRALFYIVLAIFAVVHVVGAVAVAAYVLASPGARRTLGDKSLNTWTFAVFTTVSTFSNCGFMPTNENMVVFKRDAPLQLLLVPQVLAGNTLFAPLLAACVWAAAAATRREELVEMAREGGRAAAAGYAHLMPARRCWMLAATVAAFVAVLMALVCGMEWGGALQGMSPWEKVVNALFLAVNARHTGESTVDLSILAPAILVLFVLMMYLPPYTTWFPFEENSTTKDSNAENQGIRLLESTLLSQLSYLTIFVIAICITERRKLKEDPLNFSVLSIVVEVVSAYGNVGFSMGYSCSRQINPDHLCTDKWTGFVGRWSDSGKLILIFVMFFGRLKKFSMKGGKAWKLS</sequence>
<keyword id="KW-0406">Ion transport</keyword>
<keyword id="KW-0472">Membrane</keyword>
<keyword id="KW-1185">Reference proteome</keyword>
<keyword id="KW-0812">Transmembrane</keyword>
<keyword id="KW-1133">Transmembrane helix</keyword>
<keyword id="KW-0813">Transport</keyword>
<organism>
    <name type="scientific">Oryza sativa subsp. japonica</name>
    <name type="common">Rice</name>
    <dbReference type="NCBI Taxonomy" id="39947"/>
    <lineage>
        <taxon>Eukaryota</taxon>
        <taxon>Viridiplantae</taxon>
        <taxon>Streptophyta</taxon>
        <taxon>Embryophyta</taxon>
        <taxon>Tracheophyta</taxon>
        <taxon>Spermatophyta</taxon>
        <taxon>Magnoliopsida</taxon>
        <taxon>Liliopsida</taxon>
        <taxon>Poales</taxon>
        <taxon>Poaceae</taxon>
        <taxon>BOP clade</taxon>
        <taxon>Oryzoideae</taxon>
        <taxon>Oryzeae</taxon>
        <taxon>Oryzinae</taxon>
        <taxon>Oryza</taxon>
        <taxon>Oryza sativa</taxon>
    </lineage>
</organism>
<evidence type="ECO:0000255" key="1"/>
<evidence type="ECO:0000256" key="2">
    <source>
        <dbReference type="SAM" id="MobiDB-lite"/>
    </source>
</evidence>
<evidence type="ECO:0000303" key="3">
    <source>
    </source>
</evidence>
<evidence type="ECO:0000303" key="4">
    <source>
    </source>
</evidence>
<evidence type="ECO:0000305" key="5"/>
<evidence type="ECO:0000312" key="6">
    <source>
        <dbReference type="EMBL" id="BAS90913.1"/>
    </source>
</evidence>
<evidence type="ECO:0000312" key="7">
    <source>
        <dbReference type="EMBL" id="CAE03639.1"/>
    </source>
</evidence>
<protein>
    <recommendedName>
        <fullName evidence="4">Probable cation transporter HKT1;4</fullName>
        <shortName evidence="4">OsHKT1;4</shortName>
    </recommendedName>
    <alternativeName>
        <fullName evidence="3">Probable cation transporter HKT7</fullName>
        <shortName evidence="3">OsHKT7</shortName>
    </alternativeName>
</protein>
<dbReference type="EMBL" id="AJ491853">
    <property type="protein sequence ID" value="CAD37197.1"/>
    <property type="molecule type" value="Genomic_DNA"/>
</dbReference>
<dbReference type="EMBL" id="AL606691">
    <property type="protein sequence ID" value="CAE03639.1"/>
    <property type="status" value="ALT_SEQ"/>
    <property type="molecule type" value="Genomic_DNA"/>
</dbReference>
<dbReference type="EMBL" id="AP008210">
    <property type="protein sequence ID" value="BAF15724.1"/>
    <property type="molecule type" value="Genomic_DNA"/>
</dbReference>
<dbReference type="EMBL" id="AP014960">
    <property type="protein sequence ID" value="BAS90913.1"/>
    <property type="molecule type" value="Genomic_DNA"/>
</dbReference>
<dbReference type="EMBL" id="AK109852">
    <property type="protein sequence ID" value="BAG98930.1"/>
    <property type="molecule type" value="mRNA"/>
</dbReference>
<dbReference type="EMBL" id="AK120889">
    <property type="protein sequence ID" value="BAH00215.1"/>
    <property type="molecule type" value="mRNA"/>
</dbReference>
<dbReference type="RefSeq" id="NP_001389349.1">
    <property type="nucleotide sequence ID" value="NM_001402420.1"/>
</dbReference>
<dbReference type="RefSeq" id="XP_015633970.1">
    <property type="nucleotide sequence ID" value="XM_015778484.1"/>
</dbReference>
<dbReference type="SMR" id="Q7XPF7"/>
<dbReference type="FunCoup" id="Q7XPF7">
    <property type="interactions" value="6"/>
</dbReference>
<dbReference type="STRING" id="39947.Q7XPF7"/>
<dbReference type="PaxDb" id="39947-Q7XPF7"/>
<dbReference type="EnsemblPlants" id="Os04t0607600-01">
    <property type="protein sequence ID" value="Os04t0607600-01"/>
    <property type="gene ID" value="Os04g0607600"/>
</dbReference>
<dbReference type="GeneID" id="4336927"/>
<dbReference type="Gramene" id="Os04t0607600-01">
    <property type="protein sequence ID" value="Os04t0607600-01"/>
    <property type="gene ID" value="Os04g0607600"/>
</dbReference>
<dbReference type="KEGG" id="dosa:Os04g0607600"/>
<dbReference type="eggNOG" id="KOG1341">
    <property type="taxonomic scope" value="Eukaryota"/>
</dbReference>
<dbReference type="HOGENOM" id="CLU_008384_2_0_1"/>
<dbReference type="InParanoid" id="Q7XPF7"/>
<dbReference type="OMA" id="RCWMLAG"/>
<dbReference type="OrthoDB" id="9999863at2759"/>
<dbReference type="Proteomes" id="UP000000763">
    <property type="component" value="Chromosome 4"/>
</dbReference>
<dbReference type="Proteomes" id="UP000059680">
    <property type="component" value="Chromosome 4"/>
</dbReference>
<dbReference type="GO" id="GO:0005886">
    <property type="term" value="C:plasma membrane"/>
    <property type="evidence" value="ECO:0000318"/>
    <property type="project" value="GO_Central"/>
</dbReference>
<dbReference type="GO" id="GO:0008324">
    <property type="term" value="F:monoatomic cation transmembrane transporter activity"/>
    <property type="evidence" value="ECO:0000318"/>
    <property type="project" value="GO_Central"/>
</dbReference>
<dbReference type="GO" id="GO:0098662">
    <property type="term" value="P:inorganic cation transmembrane transport"/>
    <property type="evidence" value="ECO:0007669"/>
    <property type="project" value="UniProtKB-ARBA"/>
</dbReference>
<dbReference type="GO" id="GO:0030001">
    <property type="term" value="P:metal ion transport"/>
    <property type="evidence" value="ECO:0007669"/>
    <property type="project" value="UniProtKB-ARBA"/>
</dbReference>
<dbReference type="InterPro" id="IPR003445">
    <property type="entry name" value="Cat_transpt"/>
</dbReference>
<dbReference type="InterPro" id="IPR051143">
    <property type="entry name" value="TrkH_K-transport"/>
</dbReference>
<dbReference type="PANTHER" id="PTHR31064:SF38">
    <property type="entry name" value="CATION TRANSPORTER HKT1_4-RELATED"/>
    <property type="match status" value="1"/>
</dbReference>
<dbReference type="PANTHER" id="PTHR31064">
    <property type="entry name" value="POTASSIUM TRANSPORT PROTEIN DDB_G0292412-RELATED"/>
    <property type="match status" value="1"/>
</dbReference>
<dbReference type="Pfam" id="PF02386">
    <property type="entry name" value="TrkH"/>
    <property type="match status" value="2"/>
</dbReference>